<sequence length="337" mass="37104">METNLQQVKNSSQTFSEKQNPKQEASPSPISSTCSSPSHDFSFTISLQPLSSSSKHISPTLRSPSKTTSSYQQTDPFAVDLSPADEIFFHGHLLPLHLLSHLPVSPRTSTGSYNDGFTLPVKDILPDQPTNNNNNTENAITNISTEAKDDNTEDKAEGEIRVKTKPIKSFSLFGLSKWRKGFESNEREQEQQQQKIKKPMSLDLSHAVKKYIRMLFQKRGNGTQFWNRRQTSSYSFSSSLMGPNGNSKTMINGSYNKRDLIRGRRGELFSAPASMRTSPTNSGHLRVSTAGLSSSSGSTSSSSSDSTMEELQAAIQAAIAHCKNSSAVDRDDKVKDS</sequence>
<feature type="chain" id="PRO_0000410475" description="BRI1 kinase inhibitor 1">
    <location>
        <begin position="1"/>
        <end position="337"/>
    </location>
</feature>
<feature type="region of interest" description="Disordered" evidence="1">
    <location>
        <begin position="1"/>
        <end position="38"/>
    </location>
</feature>
<feature type="region of interest" description="Disordered" evidence="1">
    <location>
        <begin position="51"/>
        <end position="72"/>
    </location>
</feature>
<feature type="region of interest" description="Disordered" evidence="1">
    <location>
        <begin position="270"/>
        <end position="310"/>
    </location>
</feature>
<feature type="compositionally biased region" description="Polar residues" evidence="1">
    <location>
        <begin position="1"/>
        <end position="25"/>
    </location>
</feature>
<feature type="compositionally biased region" description="Low complexity" evidence="1">
    <location>
        <begin position="26"/>
        <end position="38"/>
    </location>
</feature>
<feature type="compositionally biased region" description="Low complexity" evidence="1">
    <location>
        <begin position="288"/>
        <end position="310"/>
    </location>
</feature>
<feature type="modified residue" description="Phosphotyrosine" evidence="3">
    <location>
        <position position="211"/>
    </location>
</feature>
<feature type="mutagenesis site" description="No effect on subcellular location. Cytosolic only; when associated with 197-A-A-198 or 197-A-A-198 and 209-A-A-210 and 218-A-A-219." evidence="3">
    <original>RK</original>
    <variation>AA</variation>
    <location>
        <begin position="179"/>
        <end position="180"/>
    </location>
</feature>
<feature type="mutagenesis site" description="Reduced cell membrane localization. Cytosolic only; when associated with 179-A-A-180 or 179-A-A-180 and 209-A-A-210 and 218-A-A-219." evidence="3">
    <original>KK</original>
    <variation>AA</variation>
    <location>
        <begin position="197"/>
        <end position="198"/>
    </location>
</feature>
<feature type="mutagenesis site" description="Reduced cell membrane localization. Cytosolic only; when associated with 218-A-A-219 or 179-A-A-180 and 197-A-A-198 and 218-A-A-219." evidence="3">
    <original>KK</original>
    <variation>AA</variation>
    <location>
        <begin position="209"/>
        <end position="210"/>
    </location>
</feature>
<feature type="mutagenesis site" description="Cytosolic. Loss of membrane localization in absence of brassinosteroid treatment." evidence="3">
    <original>Y</original>
    <variation>D</variation>
    <location>
        <position position="211"/>
    </location>
</feature>
<feature type="mutagenesis site" description="Loss of cytosolic localization. No dissociation from the membrane upon brassinosteroid treatment." evidence="3">
    <original>Y</original>
    <variation>F</variation>
    <location>
        <position position="211"/>
    </location>
</feature>
<feature type="mutagenesis site" description="No effect on subcellular location. Cytosolic only; when associated with 209-A-A-210 or 179-A-A-180 and 197-A-A-198 and 209-A-A-210." evidence="3">
    <original>KR</original>
    <variation>AA</variation>
    <location>
        <begin position="218"/>
        <end position="219"/>
    </location>
</feature>
<feature type="mutagenesis site" description="No effect on phosphorylation and subcellular location." evidence="3">
    <original>C</original>
    <variation>A</variation>
    <location>
        <position position="322"/>
    </location>
</feature>
<feature type="helix" evidence="4">
    <location>
        <begin position="308"/>
        <end position="321"/>
    </location>
</feature>
<evidence type="ECO:0000256" key="1">
    <source>
        <dbReference type="SAM" id="MobiDB-lite"/>
    </source>
</evidence>
<evidence type="ECO:0000269" key="2">
    <source>
    </source>
</evidence>
<evidence type="ECO:0000269" key="3">
    <source>
    </source>
</evidence>
<evidence type="ECO:0007829" key="4">
    <source>
        <dbReference type="PDB" id="4OH4"/>
    </source>
</evidence>
<reference key="1">
    <citation type="journal article" date="1997" name="DNA Res.">
        <title>Structural analysis of Arabidopsis thaliana chromosome 5. III. Sequence features of the regions of 1,191,918 bp covered by seventeen physically assigned P1 clones.</title>
        <authorList>
            <person name="Nakamura Y."/>
            <person name="Sato S."/>
            <person name="Kaneko T."/>
            <person name="Kotani H."/>
            <person name="Asamizu E."/>
            <person name="Miyajima N."/>
            <person name="Tabata S."/>
        </authorList>
    </citation>
    <scope>NUCLEOTIDE SEQUENCE [LARGE SCALE GENOMIC DNA]</scope>
    <source>
        <strain>cv. Columbia</strain>
    </source>
</reference>
<reference key="2">
    <citation type="journal article" date="2017" name="Plant J.">
        <title>Araport11: a complete reannotation of the Arabidopsis thaliana reference genome.</title>
        <authorList>
            <person name="Cheng C.Y."/>
            <person name="Krishnakumar V."/>
            <person name="Chan A.P."/>
            <person name="Thibaud-Nissen F."/>
            <person name="Schobel S."/>
            <person name="Town C.D."/>
        </authorList>
    </citation>
    <scope>GENOME REANNOTATION</scope>
    <source>
        <strain>cv. Columbia</strain>
    </source>
</reference>
<reference key="3">
    <citation type="submission" date="2002-03" db="EMBL/GenBank/DDBJ databases">
        <title>Full-length cDNA from Arabidopsis thaliana.</title>
        <authorList>
            <person name="Brover V.V."/>
            <person name="Troukhan M.E."/>
            <person name="Alexandrov N.A."/>
            <person name="Lu Y.-P."/>
            <person name="Flavell R.B."/>
            <person name="Feldmann K.A."/>
        </authorList>
    </citation>
    <scope>NUCLEOTIDE SEQUENCE [LARGE SCALE MRNA]</scope>
</reference>
<reference key="4">
    <citation type="submission" date="2008-06" db="EMBL/GenBank/DDBJ databases">
        <title>Arabidopsis ORF clones.</title>
        <authorList>
            <person name="De Los Reyes C."/>
            <person name="Quan R."/>
            <person name="Chen H."/>
            <person name="Bautista V."/>
            <person name="Kim C.J."/>
            <person name="Ecker J.R."/>
        </authorList>
    </citation>
    <scope>NUCLEOTIDE SEQUENCE [LARGE SCALE MRNA]</scope>
</reference>
<reference key="5">
    <citation type="journal article" date="2006" name="Science">
        <title>Brassinosteroids regulate dissociation of BKI1, a negative regulator of BRI1 signaling, from the plasma membrane.</title>
        <authorList>
            <person name="Wang X."/>
            <person name="Chory J."/>
        </authorList>
    </citation>
    <scope>FUNCTION</scope>
    <scope>INTERACTION WITH BRI1</scope>
    <scope>TISSUE SPECIFICITY</scope>
    <scope>PHOSPHORYLATION</scope>
</reference>
<reference key="6">
    <citation type="journal article" date="2011" name="Genes Dev.">
        <title>Tyrosine phosphorylation controls brassinosteroid receptor activation by triggering membrane release of its kinase inhibitor.</title>
        <authorList>
            <person name="Jaillais Y."/>
            <person name="Hothorn M."/>
            <person name="Belkhadir Y."/>
            <person name="Dabi T."/>
            <person name="Nimchuk Z.L."/>
            <person name="Meyerowitz E.M."/>
            <person name="Chory J."/>
        </authorList>
    </citation>
    <scope>SUBCELLULAR LOCATION</scope>
    <scope>PHOSPHORYLATION AT TYR-211</scope>
    <scope>MUTAGENESIS OF 179-ARG-LYS-180; 197-LYS-LYS-198; 209-LYS-LYS-210; TYR-211; 218-LYS-LYS-219 AND CYS-322</scope>
</reference>
<accession>Q9FMZ0</accession>
<accession>Q8LBG8</accession>
<protein>
    <recommendedName>
        <fullName>BRI1 kinase inhibitor 1</fullName>
    </recommendedName>
</protein>
<dbReference type="EMBL" id="AB007647">
    <property type="protein sequence ID" value="BAB10631.1"/>
    <property type="molecule type" value="Genomic_DNA"/>
</dbReference>
<dbReference type="EMBL" id="CP002688">
    <property type="protein sequence ID" value="AED94856.1"/>
    <property type="molecule type" value="Genomic_DNA"/>
</dbReference>
<dbReference type="EMBL" id="AY087216">
    <property type="protein sequence ID" value="AAM64772.1"/>
    <property type="molecule type" value="mRNA"/>
</dbReference>
<dbReference type="EMBL" id="BT033090">
    <property type="protein sequence ID" value="ACF04813.1"/>
    <property type="molecule type" value="mRNA"/>
</dbReference>
<dbReference type="RefSeq" id="NP_568610.1">
    <property type="nucleotide sequence ID" value="NM_123639.3"/>
</dbReference>
<dbReference type="PDB" id="4OH4">
    <property type="method" value="X-ray"/>
    <property type="resolution" value="2.25 A"/>
    <property type="chains" value="E/F=306-325"/>
</dbReference>
<dbReference type="PDB" id="4Q5J">
    <property type="method" value="X-ray"/>
    <property type="resolution" value="2.77 A"/>
    <property type="chains" value="E/F=306-325"/>
</dbReference>
<dbReference type="PDBsum" id="4OH4"/>
<dbReference type="PDBsum" id="4Q5J"/>
<dbReference type="SMR" id="Q9FMZ0"/>
<dbReference type="BioGRID" id="19534">
    <property type="interactions" value="1"/>
</dbReference>
<dbReference type="FunCoup" id="Q9FMZ0">
    <property type="interactions" value="680"/>
</dbReference>
<dbReference type="IntAct" id="Q9FMZ0">
    <property type="interactions" value="1"/>
</dbReference>
<dbReference type="STRING" id="3702.Q9FMZ0"/>
<dbReference type="iPTMnet" id="Q9FMZ0"/>
<dbReference type="PaxDb" id="3702-AT5G42750.1"/>
<dbReference type="ProteomicsDB" id="240353"/>
<dbReference type="EnsemblPlants" id="AT5G42750.1">
    <property type="protein sequence ID" value="AT5G42750.1"/>
    <property type="gene ID" value="AT5G42750"/>
</dbReference>
<dbReference type="GeneID" id="834284"/>
<dbReference type="Gramene" id="AT5G42750.1">
    <property type="protein sequence ID" value="AT5G42750.1"/>
    <property type="gene ID" value="AT5G42750"/>
</dbReference>
<dbReference type="KEGG" id="ath:AT5G42750"/>
<dbReference type="Araport" id="AT5G42750"/>
<dbReference type="TAIR" id="AT5G42750">
    <property type="gene designation" value="BKI1"/>
</dbReference>
<dbReference type="eggNOG" id="ENOG502QT0J">
    <property type="taxonomic scope" value="Eukaryota"/>
</dbReference>
<dbReference type="HOGENOM" id="CLU_869899_0_0_1"/>
<dbReference type="InParanoid" id="Q9FMZ0"/>
<dbReference type="OMA" id="METHHQH"/>
<dbReference type="OrthoDB" id="1709800at2759"/>
<dbReference type="PhylomeDB" id="Q9FMZ0"/>
<dbReference type="PRO" id="PR:Q9FMZ0"/>
<dbReference type="Proteomes" id="UP000006548">
    <property type="component" value="Chromosome 5"/>
</dbReference>
<dbReference type="ExpressionAtlas" id="Q9FMZ0">
    <property type="expression patterns" value="baseline and differential"/>
</dbReference>
<dbReference type="GO" id="GO:0005829">
    <property type="term" value="C:cytosol"/>
    <property type="evidence" value="ECO:0000314"/>
    <property type="project" value="TAIR"/>
</dbReference>
<dbReference type="GO" id="GO:0005886">
    <property type="term" value="C:plasma membrane"/>
    <property type="evidence" value="ECO:0000314"/>
    <property type="project" value="TAIR"/>
</dbReference>
<dbReference type="GO" id="GO:0046982">
    <property type="term" value="F:protein heterodimerization activity"/>
    <property type="evidence" value="ECO:0000353"/>
    <property type="project" value="TAIR"/>
</dbReference>
<dbReference type="GO" id="GO:0004860">
    <property type="term" value="F:protein kinase inhibitor activity"/>
    <property type="evidence" value="ECO:0000314"/>
    <property type="project" value="TAIR"/>
</dbReference>
<dbReference type="GO" id="GO:0009742">
    <property type="term" value="P:brassinosteroid mediated signaling pathway"/>
    <property type="evidence" value="ECO:0007669"/>
    <property type="project" value="UniProtKB-KW"/>
</dbReference>
<dbReference type="GO" id="GO:0006629">
    <property type="term" value="P:lipid metabolic process"/>
    <property type="evidence" value="ECO:0007669"/>
    <property type="project" value="UniProtKB-KW"/>
</dbReference>
<dbReference type="GO" id="GO:0010423">
    <property type="term" value="P:negative regulation of brassinosteroid biosynthetic process"/>
    <property type="evidence" value="ECO:0000315"/>
    <property type="project" value="TAIR"/>
</dbReference>
<dbReference type="InterPro" id="IPR039620">
    <property type="entry name" value="BKI1/MAKR1/3/4"/>
</dbReference>
<dbReference type="PANTHER" id="PTHR33312:SF19">
    <property type="entry name" value="BRI1 KINASE INHIBITOR 1"/>
    <property type="match status" value="1"/>
</dbReference>
<dbReference type="PANTHER" id="PTHR33312">
    <property type="entry name" value="MEMBRANE-ASSOCIATED KINASE REGULATOR 4-RELATED"/>
    <property type="match status" value="1"/>
</dbReference>
<gene>
    <name type="primary">BKI1</name>
    <name type="ordered locus">At5g42750</name>
    <name type="ORF">MJB21.13</name>
</gene>
<keyword id="KW-0002">3D-structure</keyword>
<keyword id="KW-1070">Brassinosteroid signaling pathway</keyword>
<keyword id="KW-1003">Cell membrane</keyword>
<keyword id="KW-0963">Cytoplasm</keyword>
<keyword id="KW-0443">Lipid metabolism</keyword>
<keyword id="KW-0472">Membrane</keyword>
<keyword id="KW-0597">Phosphoprotein</keyword>
<keyword id="KW-1185">Reference proteome</keyword>
<organism>
    <name type="scientific">Arabidopsis thaliana</name>
    <name type="common">Mouse-ear cress</name>
    <dbReference type="NCBI Taxonomy" id="3702"/>
    <lineage>
        <taxon>Eukaryota</taxon>
        <taxon>Viridiplantae</taxon>
        <taxon>Streptophyta</taxon>
        <taxon>Embryophyta</taxon>
        <taxon>Tracheophyta</taxon>
        <taxon>Spermatophyta</taxon>
        <taxon>Magnoliopsida</taxon>
        <taxon>eudicotyledons</taxon>
        <taxon>Gunneridae</taxon>
        <taxon>Pentapetalae</taxon>
        <taxon>rosids</taxon>
        <taxon>malvids</taxon>
        <taxon>Brassicales</taxon>
        <taxon>Brassicaceae</taxon>
        <taxon>Camelineae</taxon>
        <taxon>Arabidopsis</taxon>
    </lineage>
</organism>
<comment type="function">
    <text evidence="2">Negative regulator of brassinosteroid signaling. When associated to the membrane, limits the interaction of BRI1 with BAK1 by binding to the kinase-inactive form of BRI1.</text>
</comment>
<comment type="subunit">
    <text evidence="2">Interacts (via C-terminus) with BRI1 (via kinase domain).</text>
</comment>
<comment type="interaction">
    <interactant intactId="EBI-1111615">
        <id>Q9FMZ0</id>
    </interactant>
    <interactant intactId="EBI-590903">
        <id>Q9ZWC8</id>
        <label>BRL1</label>
    </interactant>
    <organismsDiffer>false</organismsDiffer>
    <experiments>4</experiments>
</comment>
<comment type="subcellular location">
    <subcellularLocation>
        <location evidence="3">Cell membrane</location>
    </subcellularLocation>
    <subcellularLocation>
        <location evidence="3">Cytoplasm</location>
    </subcellularLocation>
    <text>Once phosphorylated following brassinosteroid treatment, displaced from the plasma membrane into the cytosol where it is inactive.</text>
</comment>
<comment type="tissue specificity">
    <text evidence="2">Expressed in leaves, petioles, shoot apices, hypocotyls, roots and flowers.</text>
</comment>
<comment type="domain">
    <text>The c-terminal part (253-337) is necessary and sufficient for the interaction with BRI1.</text>
</comment>
<comment type="PTM">
    <text evidence="2 3">Phosphorylated on Tyr-211 in response to brassinosteroid perception, leading to its inactivation: once phosphorylated, displaced into the cytosol where it is inactive.</text>
</comment>
<comment type="miscellaneous">
    <text>BRI1 is not required for BKI1 association with the plasma membrane, but the BRI1 kinase activity is necessary for the membrane release.</text>
</comment>
<proteinExistence type="evidence at protein level"/>
<name>BKI1_ARATH</name>